<organism>
    <name type="scientific">Oryza sativa subsp. indica</name>
    <name type="common">Rice</name>
    <dbReference type="NCBI Taxonomy" id="39946"/>
    <lineage>
        <taxon>Eukaryota</taxon>
        <taxon>Viridiplantae</taxon>
        <taxon>Streptophyta</taxon>
        <taxon>Embryophyta</taxon>
        <taxon>Tracheophyta</taxon>
        <taxon>Spermatophyta</taxon>
        <taxon>Magnoliopsida</taxon>
        <taxon>Liliopsida</taxon>
        <taxon>Poales</taxon>
        <taxon>Poaceae</taxon>
        <taxon>BOP clade</taxon>
        <taxon>Oryzoideae</taxon>
        <taxon>Oryzeae</taxon>
        <taxon>Oryzinae</taxon>
        <taxon>Oryza</taxon>
        <taxon>Oryza sativa</taxon>
    </lineage>
</organism>
<feature type="chain" id="PRO_0000433819" description="Two-component response regulator ORR2">
    <location>
        <begin position="1"/>
        <end position="252"/>
    </location>
</feature>
<feature type="domain" description="Response regulatory" evidence="2">
    <location>
        <begin position="7"/>
        <end position="157"/>
    </location>
</feature>
<feature type="modified residue" description="4-aspartylphosphate" evidence="2">
    <location>
        <position position="90"/>
    </location>
</feature>
<accession>Q4GZK9</accession>
<keyword id="KW-0932">Cytokinin signaling pathway</keyword>
<keyword id="KW-0597">Phosphoprotein</keyword>
<keyword id="KW-0804">Transcription</keyword>
<keyword id="KW-0805">Transcription regulation</keyword>
<keyword id="KW-0902">Two-component regulatory system</keyword>
<sequence length="252" mass="26856">MGAEAVRVLVVDDSPVDRRVVELLLRAHCGGGGGAAAGEAAPFHVTAVDSGKKAMELLGRRRGDRDHLTPSSPAAAAAANDQAIDIVLTDYCMPEMTGYDLLKAIKALGSPNPIPVVVMSSENEPQRISRCLTAGAEDFILKPLKMNDVQRLRKCSGATRPKSAVAGDDDRCCNTAKKAAAAAAATPEQQQQQQRSSHLAGLAMVMNASSFEVSHYFQLIFKLILLAYAVLCLSQLLHRWSNGSSLLSLWCA</sequence>
<protein>
    <recommendedName>
        <fullName evidence="5">Two-component response regulator ORR2</fullName>
    </recommendedName>
    <alternativeName>
        <fullName evidence="4">Type A response regulator 2</fullName>
        <shortName evidence="4">OsRR2</shortName>
    </alternativeName>
</protein>
<dbReference type="EMBL" id="AJ938071">
    <property type="protein sequence ID" value="CAI79406.1"/>
    <property type="molecule type" value="mRNA"/>
</dbReference>
<dbReference type="SMR" id="Q4GZK9"/>
<dbReference type="GO" id="GO:0009736">
    <property type="term" value="P:cytokinin-activated signaling pathway"/>
    <property type="evidence" value="ECO:0007669"/>
    <property type="project" value="UniProtKB-KW"/>
</dbReference>
<dbReference type="GO" id="GO:0000160">
    <property type="term" value="P:phosphorelay signal transduction system"/>
    <property type="evidence" value="ECO:0007669"/>
    <property type="project" value="UniProtKB-KW"/>
</dbReference>
<dbReference type="GO" id="GO:0009735">
    <property type="term" value="P:response to cytokinin"/>
    <property type="evidence" value="ECO:0000305"/>
    <property type="project" value="Gramene"/>
</dbReference>
<dbReference type="CDD" id="cd17581">
    <property type="entry name" value="REC_typeA_ARR"/>
    <property type="match status" value="1"/>
</dbReference>
<dbReference type="FunFam" id="3.40.50.2300:FF:000571">
    <property type="entry name" value="Two-component response regulator ORR2"/>
    <property type="match status" value="1"/>
</dbReference>
<dbReference type="Gene3D" id="3.40.50.2300">
    <property type="match status" value="1"/>
</dbReference>
<dbReference type="InterPro" id="IPR045279">
    <property type="entry name" value="ARR-like"/>
</dbReference>
<dbReference type="InterPro" id="IPR011006">
    <property type="entry name" value="CheY-like_superfamily"/>
</dbReference>
<dbReference type="InterPro" id="IPR001789">
    <property type="entry name" value="Sig_transdc_resp-reg_receiver"/>
</dbReference>
<dbReference type="PANTHER" id="PTHR43874">
    <property type="entry name" value="TWO-COMPONENT RESPONSE REGULATOR"/>
    <property type="match status" value="1"/>
</dbReference>
<dbReference type="PANTHER" id="PTHR43874:SF85">
    <property type="entry name" value="TWO-COMPONENT RESPONSE REGULATOR ORR2"/>
    <property type="match status" value="1"/>
</dbReference>
<dbReference type="Pfam" id="PF00072">
    <property type="entry name" value="Response_reg"/>
    <property type="match status" value="1"/>
</dbReference>
<dbReference type="SMART" id="SM00448">
    <property type="entry name" value="REC"/>
    <property type="match status" value="1"/>
</dbReference>
<dbReference type="SUPFAM" id="SSF52172">
    <property type="entry name" value="CheY-like"/>
    <property type="match status" value="1"/>
</dbReference>
<dbReference type="PROSITE" id="PS50110">
    <property type="entry name" value="RESPONSE_REGULATORY"/>
    <property type="match status" value="1"/>
</dbReference>
<proteinExistence type="evidence at transcript level"/>
<comment type="function">
    <text evidence="1">Functions as a response regulator involved in His-to-Asp phosphorelay signal transduction system. Phosphorylation of the Asp residue in the receiver domain activates the ability of the protein to promote the transcription of target genes. Type-A response regulators seem to act as negative regulators of the cytokinin signaling.</text>
</comment>
<comment type="tissue specificity">
    <text evidence="3">Expressed in mature leaves and flowers, and at low levels in roots and shoots.</text>
</comment>
<comment type="induction">
    <text evidence="3">By cytokinin.</text>
</comment>
<comment type="PTM">
    <text evidence="5">Two-component system major event consists of a His-to-Asp phosphorelay between a sensor histidine kinase (HK) and a response regulator (RR). In plants, the His-to-Asp phosphorelay involves an additional intermediate named Histidine-containing phosphotransfer protein (HPt). This multistep phosphorelay consists of a His-Asp-His-Asp sequential transfer of a phosphate group between first a His and an Asp of the HK protein, followed by the transfer to a conserved His of the HPt protein and finally the transfer to an Asp in the receiver domain of the RR protein.</text>
</comment>
<comment type="similarity">
    <text evidence="5">Belongs to the ARR family. Type-A subfamily.</text>
</comment>
<reference key="1">
    <citation type="journal article" date="2006" name="BMC Plant Biol.">
        <title>Molecular characterization and differential expression of cytokinin-responsive type-A response regulators in rice (Oryza sativa).</title>
        <authorList>
            <person name="Jain M."/>
            <person name="Tyagi A.K."/>
            <person name="Khurana J.P."/>
        </authorList>
    </citation>
    <scope>NUCLEOTIDE SEQUENCE [MRNA]</scope>
    <scope>TISSUE SPECIFICITY</scope>
    <scope>INDUCTION BY CYTOKININ</scope>
    <source>
        <strain>cv. Pusa Basmati</strain>
    </source>
</reference>
<evidence type="ECO:0000250" key="1">
    <source>
        <dbReference type="UniProtKB" id="Q9ZWS9"/>
    </source>
</evidence>
<evidence type="ECO:0000255" key="2">
    <source>
        <dbReference type="PROSITE-ProRule" id="PRU00169"/>
    </source>
</evidence>
<evidence type="ECO:0000269" key="3">
    <source>
    </source>
</evidence>
<evidence type="ECO:0000303" key="4">
    <source>
    </source>
</evidence>
<evidence type="ECO:0000305" key="5"/>
<evidence type="ECO:0000312" key="6">
    <source>
        <dbReference type="EMBL" id="CAI79406.1"/>
    </source>
</evidence>
<name>ORR2_ORYSI</name>
<gene>
    <name evidence="6" type="primary">RR2</name>
</gene>